<dbReference type="EC" id="7.1.1.-" evidence="1"/>
<dbReference type="EMBL" id="CP000036">
    <property type="protein sequence ID" value="ABB66879.1"/>
    <property type="molecule type" value="Genomic_DNA"/>
</dbReference>
<dbReference type="RefSeq" id="WP_000118507.1">
    <property type="nucleotide sequence ID" value="NC_007613.1"/>
</dbReference>
<dbReference type="SMR" id="Q31YH9"/>
<dbReference type="GeneID" id="93774892"/>
<dbReference type="KEGG" id="sbo:SBO_2315"/>
<dbReference type="HOGENOM" id="CLU_015134_0_1_6"/>
<dbReference type="Proteomes" id="UP000007067">
    <property type="component" value="Chromosome"/>
</dbReference>
<dbReference type="GO" id="GO:0005886">
    <property type="term" value="C:plasma membrane"/>
    <property type="evidence" value="ECO:0007669"/>
    <property type="project" value="UniProtKB-SubCell"/>
</dbReference>
<dbReference type="GO" id="GO:0003954">
    <property type="term" value="F:NADH dehydrogenase activity"/>
    <property type="evidence" value="ECO:0007669"/>
    <property type="project" value="TreeGrafter"/>
</dbReference>
<dbReference type="GO" id="GO:0016655">
    <property type="term" value="F:oxidoreductase activity, acting on NAD(P)H, quinone or similar compound as acceptor"/>
    <property type="evidence" value="ECO:0007669"/>
    <property type="project" value="UniProtKB-UniRule"/>
</dbReference>
<dbReference type="GO" id="GO:0048038">
    <property type="term" value="F:quinone binding"/>
    <property type="evidence" value="ECO:0007669"/>
    <property type="project" value="UniProtKB-KW"/>
</dbReference>
<dbReference type="GO" id="GO:0009060">
    <property type="term" value="P:aerobic respiration"/>
    <property type="evidence" value="ECO:0007669"/>
    <property type="project" value="TreeGrafter"/>
</dbReference>
<dbReference type="HAMAP" id="MF_01350">
    <property type="entry name" value="NDH1_NuoH"/>
    <property type="match status" value="1"/>
</dbReference>
<dbReference type="InterPro" id="IPR001694">
    <property type="entry name" value="NADH_UbQ_OxRdtase_su1/FPO"/>
</dbReference>
<dbReference type="InterPro" id="IPR018086">
    <property type="entry name" value="NADH_UbQ_OxRdtase_su1_CS"/>
</dbReference>
<dbReference type="NCBIfam" id="NF004740">
    <property type="entry name" value="PRK06076.1-1"/>
    <property type="match status" value="1"/>
</dbReference>
<dbReference type="NCBIfam" id="NF004741">
    <property type="entry name" value="PRK06076.1-2"/>
    <property type="match status" value="1"/>
</dbReference>
<dbReference type="PANTHER" id="PTHR11432">
    <property type="entry name" value="NADH DEHYDROGENASE SUBUNIT 1"/>
    <property type="match status" value="1"/>
</dbReference>
<dbReference type="PANTHER" id="PTHR11432:SF3">
    <property type="entry name" value="NADH-UBIQUINONE OXIDOREDUCTASE CHAIN 1"/>
    <property type="match status" value="1"/>
</dbReference>
<dbReference type="Pfam" id="PF00146">
    <property type="entry name" value="NADHdh"/>
    <property type="match status" value="1"/>
</dbReference>
<dbReference type="PROSITE" id="PS00667">
    <property type="entry name" value="COMPLEX1_ND1_1"/>
    <property type="match status" value="1"/>
</dbReference>
<dbReference type="PROSITE" id="PS00668">
    <property type="entry name" value="COMPLEX1_ND1_2"/>
    <property type="match status" value="1"/>
</dbReference>
<evidence type="ECO:0000255" key="1">
    <source>
        <dbReference type="HAMAP-Rule" id="MF_01350"/>
    </source>
</evidence>
<comment type="function">
    <text evidence="1">NDH-1 shuttles electrons from NADH, via FMN and iron-sulfur (Fe-S) centers, to quinones in the respiratory chain. The immediate electron acceptor for the enzyme in this species is believed to be ubiquinone. Couples the redox reaction to proton translocation (for every two electrons transferred, four hydrogen ions are translocated across the cytoplasmic membrane), and thus conserves the redox energy in a proton gradient. This subunit may bind ubiquinone.</text>
</comment>
<comment type="catalytic activity">
    <reaction evidence="1">
        <text>a quinone + NADH + 5 H(+)(in) = a quinol + NAD(+) + 4 H(+)(out)</text>
        <dbReference type="Rhea" id="RHEA:57888"/>
        <dbReference type="ChEBI" id="CHEBI:15378"/>
        <dbReference type="ChEBI" id="CHEBI:24646"/>
        <dbReference type="ChEBI" id="CHEBI:57540"/>
        <dbReference type="ChEBI" id="CHEBI:57945"/>
        <dbReference type="ChEBI" id="CHEBI:132124"/>
    </reaction>
</comment>
<comment type="subunit">
    <text evidence="1">NDH-1 is composed of 13 different subunits. Subunits NuoA, H, J, K, L, M, N constitute the membrane sector of the complex.</text>
</comment>
<comment type="subcellular location">
    <subcellularLocation>
        <location evidence="1">Cell inner membrane</location>
        <topology evidence="1">Multi-pass membrane protein</topology>
    </subcellularLocation>
</comment>
<comment type="similarity">
    <text evidence="1">Belongs to the complex I subunit 1 family.</text>
</comment>
<organism>
    <name type="scientific">Shigella boydii serotype 4 (strain Sb227)</name>
    <dbReference type="NCBI Taxonomy" id="300268"/>
    <lineage>
        <taxon>Bacteria</taxon>
        <taxon>Pseudomonadati</taxon>
        <taxon>Pseudomonadota</taxon>
        <taxon>Gammaproteobacteria</taxon>
        <taxon>Enterobacterales</taxon>
        <taxon>Enterobacteriaceae</taxon>
        <taxon>Shigella</taxon>
    </lineage>
</organism>
<accession>Q31YH9</accession>
<protein>
    <recommendedName>
        <fullName evidence="1">NADH-quinone oxidoreductase subunit H</fullName>
        <ecNumber evidence="1">7.1.1.-</ecNumber>
    </recommendedName>
    <alternativeName>
        <fullName evidence="1">NADH dehydrogenase I subunit H</fullName>
    </alternativeName>
    <alternativeName>
        <fullName evidence="1">NDH-1 subunit H</fullName>
    </alternativeName>
</protein>
<proteinExistence type="inferred from homology"/>
<name>NUOH_SHIBS</name>
<gene>
    <name evidence="1" type="primary">nuoH</name>
    <name type="ordered locus">SBO_2315</name>
</gene>
<reference key="1">
    <citation type="journal article" date="2005" name="Nucleic Acids Res.">
        <title>Genome dynamics and diversity of Shigella species, the etiologic agents of bacillary dysentery.</title>
        <authorList>
            <person name="Yang F."/>
            <person name="Yang J."/>
            <person name="Zhang X."/>
            <person name="Chen L."/>
            <person name="Jiang Y."/>
            <person name="Yan Y."/>
            <person name="Tang X."/>
            <person name="Wang J."/>
            <person name="Xiong Z."/>
            <person name="Dong J."/>
            <person name="Xue Y."/>
            <person name="Zhu Y."/>
            <person name="Xu X."/>
            <person name="Sun L."/>
            <person name="Chen S."/>
            <person name="Nie H."/>
            <person name="Peng J."/>
            <person name="Xu J."/>
            <person name="Wang Y."/>
            <person name="Yuan Z."/>
            <person name="Wen Y."/>
            <person name="Yao Z."/>
            <person name="Shen Y."/>
            <person name="Qiang B."/>
            <person name="Hou Y."/>
            <person name="Yu J."/>
            <person name="Jin Q."/>
        </authorList>
    </citation>
    <scope>NUCLEOTIDE SEQUENCE [LARGE SCALE GENOMIC DNA]</scope>
    <source>
        <strain>Sb227</strain>
    </source>
</reference>
<keyword id="KW-0997">Cell inner membrane</keyword>
<keyword id="KW-1003">Cell membrane</keyword>
<keyword id="KW-0472">Membrane</keyword>
<keyword id="KW-0520">NAD</keyword>
<keyword id="KW-0874">Quinone</keyword>
<keyword id="KW-1278">Translocase</keyword>
<keyword id="KW-0812">Transmembrane</keyword>
<keyword id="KW-1133">Transmembrane helix</keyword>
<keyword id="KW-0830">Ubiquinone</keyword>
<sequence>MSWISPELIEILLTILKAVVILLVVVTCGAFMSFGERRLLGLFQNRYGPNRVGWGGSLQLVADMIKMFFKEDWIPKFSDRVIFTLAPMIAFTSLLLAFAIVPVSPGWVVADLNIGILFFLMMAGLAVYAVLFAGWSSNNKYSLLGAMRASAQTLSYEVFLGLSLMGVVAQAGSFNMTDIVNSQAHVWNVIPQFFGFITFAIAGVAVCHRHPFDQPEAEQELADGYHIEYSGMKFGLFFVGEYIGIVTISALMVTLFFGGWQGPLLPPFIWFALKTAFFMMMFILIRASLPRPRYDQVMSFGWKICLPLTLINLLVTAAVILWQAQ</sequence>
<feature type="chain" id="PRO_0000244952" description="NADH-quinone oxidoreductase subunit H">
    <location>
        <begin position="1"/>
        <end position="325"/>
    </location>
</feature>
<feature type="transmembrane region" description="Helical" evidence="1">
    <location>
        <begin position="11"/>
        <end position="31"/>
    </location>
</feature>
<feature type="transmembrane region" description="Helical" evidence="1">
    <location>
        <begin position="81"/>
        <end position="101"/>
    </location>
</feature>
<feature type="transmembrane region" description="Helical" evidence="1">
    <location>
        <begin position="114"/>
        <end position="134"/>
    </location>
</feature>
<feature type="transmembrane region" description="Helical" evidence="1">
    <location>
        <begin position="154"/>
        <end position="174"/>
    </location>
</feature>
<feature type="transmembrane region" description="Helical" evidence="1">
    <location>
        <begin position="186"/>
        <end position="206"/>
    </location>
</feature>
<feature type="transmembrane region" description="Helical" evidence="1">
    <location>
        <begin position="237"/>
        <end position="257"/>
    </location>
</feature>
<feature type="transmembrane region" description="Helical" evidence="1">
    <location>
        <begin position="265"/>
        <end position="285"/>
    </location>
</feature>
<feature type="transmembrane region" description="Helical" evidence="1">
    <location>
        <begin position="304"/>
        <end position="324"/>
    </location>
</feature>